<protein>
    <recommendedName>
        <fullName>Inner membrane protein YdcO</fullName>
    </recommendedName>
</protein>
<accession>P76103</accession>
<accession>P77540</accession>
<reference key="1">
    <citation type="journal article" date="1996" name="DNA Res.">
        <title>A 570-kb DNA sequence of the Escherichia coli K-12 genome corresponding to the 28.0-40.1 min region on the linkage map.</title>
        <authorList>
            <person name="Aiba H."/>
            <person name="Baba T."/>
            <person name="Fujita K."/>
            <person name="Hayashi K."/>
            <person name="Inada T."/>
            <person name="Isono K."/>
            <person name="Itoh T."/>
            <person name="Kasai H."/>
            <person name="Kashimoto K."/>
            <person name="Kimura S."/>
            <person name="Kitakawa M."/>
            <person name="Kitagawa M."/>
            <person name="Makino K."/>
            <person name="Miki T."/>
            <person name="Mizobuchi K."/>
            <person name="Mori H."/>
            <person name="Mori T."/>
            <person name="Motomura K."/>
            <person name="Nakade S."/>
            <person name="Nakamura Y."/>
            <person name="Nashimoto H."/>
            <person name="Nishio Y."/>
            <person name="Oshima T."/>
            <person name="Saito N."/>
            <person name="Sampei G."/>
            <person name="Seki Y."/>
            <person name="Sivasundaram S."/>
            <person name="Tagami H."/>
            <person name="Takeda J."/>
            <person name="Takemoto K."/>
            <person name="Takeuchi Y."/>
            <person name="Wada C."/>
            <person name="Yamamoto Y."/>
            <person name="Horiuchi T."/>
        </authorList>
    </citation>
    <scope>NUCLEOTIDE SEQUENCE [LARGE SCALE GENOMIC DNA]</scope>
    <source>
        <strain>K12 / W3110 / ATCC 27325 / DSM 5911</strain>
    </source>
</reference>
<reference key="2">
    <citation type="journal article" date="1997" name="Science">
        <title>The complete genome sequence of Escherichia coli K-12.</title>
        <authorList>
            <person name="Blattner F.R."/>
            <person name="Plunkett G. III"/>
            <person name="Bloch C.A."/>
            <person name="Perna N.T."/>
            <person name="Burland V."/>
            <person name="Riley M."/>
            <person name="Collado-Vides J."/>
            <person name="Glasner J.D."/>
            <person name="Rode C.K."/>
            <person name="Mayhew G.F."/>
            <person name="Gregor J."/>
            <person name="Davis N.W."/>
            <person name="Kirkpatrick H.A."/>
            <person name="Goeden M.A."/>
            <person name="Rose D.J."/>
            <person name="Mau B."/>
            <person name="Shao Y."/>
        </authorList>
    </citation>
    <scope>NUCLEOTIDE SEQUENCE [LARGE SCALE GENOMIC DNA]</scope>
    <source>
        <strain>K12 / MG1655 / ATCC 47076</strain>
    </source>
</reference>
<reference key="3">
    <citation type="journal article" date="2006" name="Mol. Syst. Biol.">
        <title>Highly accurate genome sequences of Escherichia coli K-12 strains MG1655 and W3110.</title>
        <authorList>
            <person name="Hayashi K."/>
            <person name="Morooka N."/>
            <person name="Yamamoto Y."/>
            <person name="Fujita K."/>
            <person name="Isono K."/>
            <person name="Choi S."/>
            <person name="Ohtsubo E."/>
            <person name="Baba T."/>
            <person name="Wanner B.L."/>
            <person name="Mori H."/>
            <person name="Horiuchi T."/>
        </authorList>
    </citation>
    <scope>NUCLEOTIDE SEQUENCE [LARGE SCALE GENOMIC DNA]</scope>
    <source>
        <strain>K12 / W3110 / ATCC 27325 / DSM 5911</strain>
    </source>
</reference>
<reference key="4">
    <citation type="journal article" date="2005" name="Science">
        <title>Global topology analysis of the Escherichia coli inner membrane proteome.</title>
        <authorList>
            <person name="Daley D.O."/>
            <person name="Rapp M."/>
            <person name="Granseth E."/>
            <person name="Melen K."/>
            <person name="Drew D."/>
            <person name="von Heijne G."/>
        </authorList>
    </citation>
    <scope>TOPOLOGY [LARGE SCALE ANALYSIS]</scope>
    <source>
        <strain>K12 / MG1655 / ATCC 47076</strain>
    </source>
</reference>
<gene>
    <name type="primary">ydcO</name>
    <name type="ordered locus">b1433</name>
    <name type="ordered locus">JW5229</name>
</gene>
<comment type="subcellular location">
    <subcellularLocation>
        <location>Cell inner membrane</location>
        <topology>Multi-pass membrane protein</topology>
    </subcellularLocation>
</comment>
<dbReference type="EMBL" id="U00096">
    <property type="protein sequence ID" value="AAC74515.2"/>
    <property type="molecule type" value="Genomic_DNA"/>
</dbReference>
<dbReference type="EMBL" id="AP009048">
    <property type="protein sequence ID" value="BAA15061.2"/>
    <property type="molecule type" value="Genomic_DNA"/>
</dbReference>
<dbReference type="PIR" id="D64895">
    <property type="entry name" value="D64895"/>
</dbReference>
<dbReference type="RefSeq" id="NP_415950.4">
    <property type="nucleotide sequence ID" value="NC_000913.3"/>
</dbReference>
<dbReference type="RefSeq" id="WP_001236265.1">
    <property type="nucleotide sequence ID" value="NZ_CP047127.1"/>
</dbReference>
<dbReference type="BioGRID" id="4261752">
    <property type="interactions" value="256"/>
</dbReference>
<dbReference type="FunCoup" id="P76103">
    <property type="interactions" value="15"/>
</dbReference>
<dbReference type="STRING" id="511145.b1433"/>
<dbReference type="TCDB" id="2.A.46.1.9">
    <property type="family name" value="the benzoate:h+ symporter (bene) family"/>
</dbReference>
<dbReference type="PaxDb" id="511145-b1433"/>
<dbReference type="EnsemblBacteria" id="AAC74515">
    <property type="protein sequence ID" value="AAC74515"/>
    <property type="gene ID" value="b1433"/>
</dbReference>
<dbReference type="GeneID" id="947247"/>
<dbReference type="KEGG" id="ecj:JW5229"/>
<dbReference type="KEGG" id="eco:b1433"/>
<dbReference type="KEGG" id="ecoc:C3026_08345"/>
<dbReference type="PATRIC" id="fig|1411691.4.peg.836"/>
<dbReference type="EchoBASE" id="EB3521"/>
<dbReference type="eggNOG" id="COG3135">
    <property type="taxonomic scope" value="Bacteria"/>
</dbReference>
<dbReference type="HOGENOM" id="CLU_041268_2_0_6"/>
<dbReference type="InParanoid" id="P76103"/>
<dbReference type="OMA" id="AVWCGIF"/>
<dbReference type="PhylomeDB" id="P76103"/>
<dbReference type="BioCyc" id="EcoCyc:B1433-MONOMER"/>
<dbReference type="PRO" id="PR:P76103"/>
<dbReference type="Proteomes" id="UP000000625">
    <property type="component" value="Chromosome"/>
</dbReference>
<dbReference type="GO" id="GO:0005886">
    <property type="term" value="C:plasma membrane"/>
    <property type="evidence" value="ECO:0000314"/>
    <property type="project" value="EcoCyc"/>
</dbReference>
<dbReference type="GO" id="GO:0042925">
    <property type="term" value="F:benzoate transmembrane transporter activity"/>
    <property type="evidence" value="ECO:0007669"/>
    <property type="project" value="InterPro"/>
</dbReference>
<dbReference type="InterPro" id="IPR004711">
    <property type="entry name" value="Benzoate_Transporter"/>
</dbReference>
<dbReference type="NCBIfam" id="TIGR00843">
    <property type="entry name" value="benE"/>
    <property type="match status" value="1"/>
</dbReference>
<dbReference type="PANTHER" id="PTHR30199:SF0">
    <property type="entry name" value="INNER MEMBRANE PROTEIN YDCO"/>
    <property type="match status" value="1"/>
</dbReference>
<dbReference type="PANTHER" id="PTHR30199">
    <property type="entry name" value="MFS FAMILY TRANSPORTER, PREDICTED SUBSTRATE BENZOATE"/>
    <property type="match status" value="1"/>
</dbReference>
<dbReference type="Pfam" id="PF03594">
    <property type="entry name" value="BenE"/>
    <property type="match status" value="1"/>
</dbReference>
<dbReference type="PROSITE" id="PS00041">
    <property type="entry name" value="HTH_ARAC_FAMILY_1"/>
    <property type="match status" value="1"/>
</dbReference>
<name>YDCO_ECOLI</name>
<organism>
    <name type="scientific">Escherichia coli (strain K12)</name>
    <dbReference type="NCBI Taxonomy" id="83333"/>
    <lineage>
        <taxon>Bacteria</taxon>
        <taxon>Pseudomonadati</taxon>
        <taxon>Pseudomonadota</taxon>
        <taxon>Gammaproteobacteria</taxon>
        <taxon>Enterobacterales</taxon>
        <taxon>Enterobacteriaceae</taxon>
        <taxon>Escherichia</taxon>
    </lineage>
</organism>
<proteinExistence type="evidence at protein level"/>
<keyword id="KW-0997">Cell inner membrane</keyword>
<keyword id="KW-1003">Cell membrane</keyword>
<keyword id="KW-0472">Membrane</keyword>
<keyword id="KW-1185">Reference proteome</keyword>
<keyword id="KW-0812">Transmembrane</keyword>
<keyword id="KW-1133">Transmembrane helix</keyword>
<feature type="chain" id="PRO_0000201320" description="Inner membrane protein YdcO">
    <location>
        <begin position="1"/>
        <end position="391"/>
    </location>
</feature>
<feature type="topological domain" description="Cytoplasmic" evidence="1">
    <location>
        <begin position="1"/>
        <end position="9"/>
    </location>
</feature>
<feature type="transmembrane region" description="Helical" evidence="1">
    <location>
        <begin position="10"/>
        <end position="30"/>
    </location>
</feature>
<feature type="topological domain" description="Periplasmic" evidence="1">
    <location>
        <begin position="31"/>
        <end position="42"/>
    </location>
</feature>
<feature type="transmembrane region" description="Helical" evidence="1">
    <location>
        <begin position="43"/>
        <end position="63"/>
    </location>
</feature>
<feature type="topological domain" description="Cytoplasmic" evidence="1">
    <location>
        <begin position="64"/>
        <end position="93"/>
    </location>
</feature>
<feature type="transmembrane region" description="Helical" evidence="1">
    <location>
        <begin position="94"/>
        <end position="114"/>
    </location>
</feature>
<feature type="topological domain" description="Periplasmic" evidence="1">
    <location>
        <begin position="115"/>
        <end position="123"/>
    </location>
</feature>
<feature type="transmembrane region" description="Helical" evidence="1">
    <location>
        <begin position="124"/>
        <end position="144"/>
    </location>
</feature>
<feature type="topological domain" description="Cytoplasmic" evidence="1">
    <location>
        <begin position="145"/>
        <end position="167"/>
    </location>
</feature>
<feature type="transmembrane region" description="Helical" evidence="1">
    <location>
        <begin position="168"/>
        <end position="188"/>
    </location>
</feature>
<feature type="topological domain" description="Periplasmic" evidence="1">
    <location>
        <begin position="189"/>
        <end position="200"/>
    </location>
</feature>
<feature type="transmembrane region" description="Helical" evidence="1">
    <location>
        <begin position="201"/>
        <end position="221"/>
    </location>
</feature>
<feature type="topological domain" description="Cytoplasmic" evidence="1">
    <location>
        <begin position="222"/>
        <end position="246"/>
    </location>
</feature>
<feature type="transmembrane region" description="Helical" evidence="1">
    <location>
        <begin position="247"/>
        <end position="267"/>
    </location>
</feature>
<feature type="topological domain" description="Periplasmic" evidence="1">
    <location>
        <begin position="268"/>
        <end position="287"/>
    </location>
</feature>
<feature type="transmembrane region" description="Helical" evidence="1">
    <location>
        <begin position="288"/>
        <end position="308"/>
    </location>
</feature>
<feature type="topological domain" description="Cytoplasmic" evidence="1">
    <location>
        <begin position="309"/>
        <end position="311"/>
    </location>
</feature>
<feature type="transmembrane region" description="Helical" evidence="1">
    <location>
        <begin position="312"/>
        <end position="332"/>
    </location>
</feature>
<feature type="topological domain" description="Periplasmic" evidence="1">
    <location>
        <begin position="333"/>
        <end position="361"/>
    </location>
</feature>
<feature type="transmembrane region" description="Helical" evidence="1">
    <location>
        <begin position="362"/>
        <end position="382"/>
    </location>
</feature>
<feature type="topological domain" description="Cytoplasmic" evidence="1">
    <location>
        <begin position="383"/>
        <end position="391"/>
    </location>
</feature>
<evidence type="ECO:0000255" key="1"/>
<sequence length="391" mass="40583">MRLFSIPPPTLLAGFLAVLIGYASSAAIIWQAAIVAGATTAQISGWMTALGLAMGVSTLTLTLWYRVPVLTAWSTPGAALLVTGLQGLTLNEAIGVFIVTNALIVLCGITGLFARLMRIIPHSLAAAMLAGILLRFGLQAFASLDGQFTLCGSMLLVWLATKAVAPRYAVIAAMIIGIVIVIAQGDVVTTDVVFKPVLPTYITPDFSFAHSLSVALPLFLVTMASQNAPGIAAMKAAGYSAPVSPLIVFTGLLALVFSPFGVYSVGIAAITAAICQSPEAHPDKDQRWLAAAVAGIFYLLAGLFGSAITGMMAALPVSWIQMLAGLALLSTIGGSLYQALHNERERDAAVVAFLVTASGLTLVGIGSAFWGLIAGGVCYVVLNLIADRNRY</sequence>